<evidence type="ECO:0000305" key="1"/>
<keyword id="KW-0328">Glycosyltransferase</keyword>
<keyword id="KW-0808">Transferase</keyword>
<comment type="similarity">
    <text evidence="1">Belongs to the glycosyltransferase 28 family.</text>
</comment>
<accession>Q8PZB2</accession>
<gene>
    <name type="ordered locus">MM_0582</name>
</gene>
<organism>
    <name type="scientific">Methanosarcina mazei (strain ATCC BAA-159 / DSM 3647 / Goe1 / Go1 / JCM 11833 / OCM 88)</name>
    <name type="common">Methanosarcina frisia</name>
    <dbReference type="NCBI Taxonomy" id="192952"/>
    <lineage>
        <taxon>Archaea</taxon>
        <taxon>Methanobacteriati</taxon>
        <taxon>Methanobacteriota</taxon>
        <taxon>Stenosarchaea group</taxon>
        <taxon>Methanomicrobia</taxon>
        <taxon>Methanosarcinales</taxon>
        <taxon>Methanosarcinaceae</taxon>
        <taxon>Methanosarcina</taxon>
    </lineage>
</organism>
<dbReference type="EC" id="2.4.-.-"/>
<dbReference type="EMBL" id="AE008384">
    <property type="protein sequence ID" value="AAM30278.1"/>
    <property type="molecule type" value="Genomic_DNA"/>
</dbReference>
<dbReference type="RefSeq" id="WP_011032533.1">
    <property type="nucleotide sequence ID" value="NC_003901.1"/>
</dbReference>
<dbReference type="SMR" id="Q8PZB2"/>
<dbReference type="CAZy" id="GT1">
    <property type="family name" value="Glycosyltransferase Family 1"/>
</dbReference>
<dbReference type="GeneID" id="1478924"/>
<dbReference type="KEGG" id="mma:MM_0582"/>
<dbReference type="PATRIC" id="fig|192952.21.peg.684"/>
<dbReference type="eggNOG" id="arCOG01393">
    <property type="taxonomic scope" value="Archaea"/>
</dbReference>
<dbReference type="HOGENOM" id="CLU_060247_0_0_2"/>
<dbReference type="Proteomes" id="UP000000595">
    <property type="component" value="Chromosome"/>
</dbReference>
<dbReference type="GO" id="GO:0016758">
    <property type="term" value="F:hexosyltransferase activity"/>
    <property type="evidence" value="ECO:0007669"/>
    <property type="project" value="InterPro"/>
</dbReference>
<dbReference type="CDD" id="cd03785">
    <property type="entry name" value="GT28_MurG"/>
    <property type="match status" value="1"/>
</dbReference>
<dbReference type="Gene3D" id="3.40.50.2000">
    <property type="entry name" value="Glycogen Phosphorylase B"/>
    <property type="match status" value="2"/>
</dbReference>
<dbReference type="InterPro" id="IPR007235">
    <property type="entry name" value="Glyco_trans_28_C"/>
</dbReference>
<dbReference type="InterPro" id="IPR028098">
    <property type="entry name" value="Glyco_trans_4-like_N"/>
</dbReference>
<dbReference type="PANTHER" id="PTHR21015:SF22">
    <property type="entry name" value="GLYCOSYLTRANSFERASE"/>
    <property type="match status" value="1"/>
</dbReference>
<dbReference type="PANTHER" id="PTHR21015">
    <property type="entry name" value="UDP-N-ACETYLGLUCOSAMINE--N-ACETYLMURAMYL-(PENTAPEPTIDE) PYROPHOSPHORYL-UNDECAPRENOL N-ACETYLGLUCOSAMINE TRANSFERASE 1"/>
    <property type="match status" value="1"/>
</dbReference>
<dbReference type="Pfam" id="PF04101">
    <property type="entry name" value="Glyco_tran_28_C"/>
    <property type="match status" value="1"/>
</dbReference>
<dbReference type="Pfam" id="PF13439">
    <property type="entry name" value="Glyco_transf_4"/>
    <property type="match status" value="1"/>
</dbReference>
<dbReference type="SUPFAM" id="SSF53756">
    <property type="entry name" value="UDP-Glycosyltransferase/glycogen phosphorylase"/>
    <property type="match status" value="1"/>
</dbReference>
<name>Y582_METMA</name>
<reference key="1">
    <citation type="journal article" date="2002" name="J. Mol. Microbiol. Biotechnol.">
        <title>The genome of Methanosarcina mazei: evidence for lateral gene transfer between Bacteria and Archaea.</title>
        <authorList>
            <person name="Deppenmeier U."/>
            <person name="Johann A."/>
            <person name="Hartsch T."/>
            <person name="Merkl R."/>
            <person name="Schmitz R.A."/>
            <person name="Martinez-Arias R."/>
            <person name="Henne A."/>
            <person name="Wiezer A."/>
            <person name="Baeumer S."/>
            <person name="Jacobi C."/>
            <person name="Brueggemann H."/>
            <person name="Lienard T."/>
            <person name="Christmann A."/>
            <person name="Boemecke M."/>
            <person name="Steckel S."/>
            <person name="Bhattacharyya A."/>
            <person name="Lykidis A."/>
            <person name="Overbeek R."/>
            <person name="Klenk H.-P."/>
            <person name="Gunsalus R.P."/>
            <person name="Fritz H.-J."/>
            <person name="Gottschalk G."/>
        </authorList>
    </citation>
    <scope>NUCLEOTIDE SEQUENCE [LARGE SCALE GENOMIC DNA]</scope>
    <source>
        <strain>ATCC BAA-159 / DSM 3647 / Goe1 / Go1 / JCM 11833 / OCM 88</strain>
    </source>
</reference>
<proteinExistence type="inferred from homology"/>
<feature type="chain" id="PRO_0000215621" description="Uncharacterized glycosyltransferase MM_0582">
    <location>
        <begin position="1"/>
        <end position="376"/>
    </location>
</feature>
<protein>
    <recommendedName>
        <fullName>Uncharacterized glycosyltransferase MM_0582</fullName>
        <ecNumber>2.4.-.-</ecNumber>
    </recommendedName>
</protein>
<sequence length="376" mass="42120">MKILLFICGEGLGHTGRCLALGKEFLAAGHEVNFGAYGYSKGLVQKTGYSAYEIPSEIKLAGEAGTFDIRKSIKETLNNLSPSGFRKILRLIEKLDPDVVLSDGYYTGILAAQKRKVPVYFIGHQFNMEEFFWKKGLFAGIAGIFVKRFYNYVFSSVDGIIVPDYPLPYSVNRKNFTISRAVNDNIFFSGPLIRCRYQEAGEKAFKRPNVLSTIGAFGYRAAVFRNVLEAAKLDPSIYYTFISGPEIDPEQFSKVPENVEFTGFTENPFPYYKGSDLVITAGGHGTIMESLAFGLPILSFPDEKHAEQENNASVLEEAGYGKRMSYLTPPEVILACIREIFEDENYSKKTRRLMELAEVLDGPAAVRKFLEEKHRG</sequence>